<proteinExistence type="inferred from homology"/>
<dbReference type="EMBL" id="Z72483">
    <property type="protein sequence ID" value="CAA96564.1"/>
    <property type="molecule type" value="mRNA"/>
</dbReference>
<dbReference type="SMR" id="P52724"/>
<dbReference type="GO" id="GO:0046872">
    <property type="term" value="F:metal ion binding"/>
    <property type="evidence" value="ECO:0007669"/>
    <property type="project" value="UniProtKB-KW"/>
</dbReference>
<dbReference type="FunFam" id="4.10.10.10:FF:000001">
    <property type="entry name" value="Metallothionein"/>
    <property type="match status" value="1"/>
</dbReference>
<dbReference type="Gene3D" id="4.10.10.10">
    <property type="entry name" value="Metallothionein Isoform II"/>
    <property type="match status" value="1"/>
</dbReference>
<dbReference type="InterPro" id="IPR017854">
    <property type="entry name" value="Metalthion_dom_sf"/>
</dbReference>
<dbReference type="InterPro" id="IPR023587">
    <property type="entry name" value="Metalthion_dom_sf_vert"/>
</dbReference>
<dbReference type="InterPro" id="IPR000006">
    <property type="entry name" value="Metalthion_vert"/>
</dbReference>
<dbReference type="InterPro" id="IPR018064">
    <property type="entry name" value="Metalthion_vert_metal_BS"/>
</dbReference>
<dbReference type="PANTHER" id="PTHR23299">
    <property type="entry name" value="METALLOTHIONEIN"/>
    <property type="match status" value="1"/>
</dbReference>
<dbReference type="PANTHER" id="PTHR23299:SF24">
    <property type="entry name" value="METALLOTHIONEIN-1X"/>
    <property type="match status" value="1"/>
</dbReference>
<dbReference type="Pfam" id="PF00131">
    <property type="entry name" value="Metallothio"/>
    <property type="match status" value="1"/>
</dbReference>
<dbReference type="PRINTS" id="PR00860">
    <property type="entry name" value="MTVERTEBRATE"/>
</dbReference>
<dbReference type="SUPFAM" id="SSF57868">
    <property type="entry name" value="Metallothionein"/>
    <property type="match status" value="1"/>
</dbReference>
<dbReference type="PROSITE" id="PS00203">
    <property type="entry name" value="METALLOTHIONEIN_VRT"/>
    <property type="match status" value="1"/>
</dbReference>
<name>MTB_CHAAC</name>
<protein>
    <recommendedName>
        <fullName>Metallothionein B</fullName>
        <shortName>MT-B</shortName>
    </recommendedName>
</protein>
<gene>
    <name type="primary">mtb</name>
</gene>
<evidence type="ECO:0000250" key="1"/>
<evidence type="ECO:0000250" key="2">
    <source>
        <dbReference type="UniProtKB" id="P02795"/>
    </source>
</evidence>
<evidence type="ECO:0000250" key="3">
    <source>
        <dbReference type="UniProtKB" id="P62339"/>
    </source>
</evidence>
<evidence type="ECO:0000305" key="4"/>
<sequence>MDPCECTKSGTCNCGGSCTCTNCSCTSCKKSCCPCCPSGCTKCASGCVCKGKTCDTSCCQ</sequence>
<feature type="chain" id="PRO_0000197274" description="Metallothionein B">
    <location>
        <begin position="1"/>
        <end position="60"/>
    </location>
</feature>
<feature type="region of interest" description="Beta">
    <location>
        <begin position="1"/>
        <end position="28"/>
    </location>
</feature>
<feature type="region of interest" description="Alpha">
    <location>
        <begin position="29"/>
        <end position="60"/>
    </location>
</feature>
<feature type="binding site" evidence="2">
    <location>
        <position position="4"/>
    </location>
    <ligand>
        <name>a divalent metal cation</name>
        <dbReference type="ChEBI" id="CHEBI:60240"/>
        <label>1</label>
        <note>in cluster B</note>
    </ligand>
</feature>
<feature type="binding site" evidence="2">
    <location>
        <position position="6"/>
    </location>
    <ligand>
        <name>a divalent metal cation</name>
        <dbReference type="ChEBI" id="CHEBI:60240"/>
        <label>1</label>
        <note>in cluster B</note>
    </ligand>
</feature>
<feature type="binding site" evidence="2">
    <location>
        <position position="6"/>
    </location>
    <ligand>
        <name>a divalent metal cation</name>
        <dbReference type="ChEBI" id="CHEBI:60240"/>
        <label>2</label>
        <note>in cluster B</note>
    </ligand>
</feature>
<feature type="binding site" evidence="2">
    <location>
        <position position="12"/>
    </location>
    <ligand>
        <name>a divalent metal cation</name>
        <dbReference type="ChEBI" id="CHEBI:60240"/>
        <label>2</label>
        <note>in cluster B</note>
    </ligand>
</feature>
<feature type="binding site" evidence="2">
    <location>
        <position position="14"/>
    </location>
    <ligand>
        <name>a divalent metal cation</name>
        <dbReference type="ChEBI" id="CHEBI:60240"/>
        <label>2</label>
        <note>in cluster B</note>
    </ligand>
</feature>
<feature type="binding site" evidence="2">
    <location>
        <position position="14"/>
    </location>
    <ligand>
        <name>a divalent metal cation</name>
        <dbReference type="ChEBI" id="CHEBI:60240"/>
        <label>3</label>
        <note>in cluster B</note>
    </ligand>
</feature>
<feature type="binding site" evidence="2">
    <location>
        <position position="18"/>
    </location>
    <ligand>
        <name>a divalent metal cation</name>
        <dbReference type="ChEBI" id="CHEBI:60240"/>
        <label>3</label>
        <note>in cluster B</note>
    </ligand>
</feature>
<feature type="binding site" evidence="2">
    <location>
        <position position="20"/>
    </location>
    <ligand>
        <name>a divalent metal cation</name>
        <dbReference type="ChEBI" id="CHEBI:60240"/>
        <label>1</label>
        <note>in cluster B</note>
    </ligand>
</feature>
<feature type="binding site" evidence="2">
    <location>
        <position position="23"/>
    </location>
    <ligand>
        <name>a divalent metal cation</name>
        <dbReference type="ChEBI" id="CHEBI:60240"/>
        <label>1</label>
        <note>in cluster B</note>
    </ligand>
</feature>
<feature type="binding site" evidence="2">
    <location>
        <position position="23"/>
    </location>
    <ligand>
        <name>a divalent metal cation</name>
        <dbReference type="ChEBI" id="CHEBI:60240"/>
        <label>3</label>
        <note>in cluster B</note>
    </ligand>
</feature>
<feature type="binding site" evidence="2">
    <location>
        <position position="25"/>
    </location>
    <ligand>
        <name>a divalent metal cation</name>
        <dbReference type="ChEBI" id="CHEBI:60240"/>
        <label>2</label>
        <note>in cluster B</note>
    </ligand>
</feature>
<feature type="binding site" evidence="2">
    <location>
        <position position="28"/>
    </location>
    <ligand>
        <name>a divalent metal cation</name>
        <dbReference type="ChEBI" id="CHEBI:60240"/>
        <label>3</label>
        <note>in cluster B</note>
    </ligand>
</feature>
<feature type="binding site" evidence="2">
    <location>
        <position position="32"/>
    </location>
    <ligand>
        <name>a divalent metal cation</name>
        <dbReference type="ChEBI" id="CHEBI:60240"/>
        <label>4</label>
        <note>in cluster A</note>
    </ligand>
</feature>
<feature type="binding site" evidence="2">
    <location>
        <position position="33"/>
    </location>
    <ligand>
        <name>a divalent metal cation</name>
        <dbReference type="ChEBI" id="CHEBI:60240"/>
        <label>4</label>
        <note>in cluster A</note>
    </ligand>
</feature>
<feature type="binding site" evidence="2">
    <location>
        <position position="33"/>
    </location>
    <ligand>
        <name>a divalent metal cation</name>
        <dbReference type="ChEBI" id="CHEBI:60240"/>
        <label>5</label>
        <note>in cluster A</note>
    </ligand>
</feature>
<feature type="binding site" evidence="2">
    <location>
        <position position="35"/>
    </location>
    <ligand>
        <name>a divalent metal cation</name>
        <dbReference type="ChEBI" id="CHEBI:60240"/>
        <label>5</label>
        <note>in cluster A</note>
    </ligand>
</feature>
<feature type="binding site" evidence="2">
    <location>
        <position position="36"/>
    </location>
    <ligand>
        <name>a divalent metal cation</name>
        <dbReference type="ChEBI" id="CHEBI:60240"/>
        <label>5</label>
        <note>in cluster A</note>
    </ligand>
</feature>
<feature type="binding site" evidence="2">
    <location>
        <position position="36"/>
    </location>
    <ligand>
        <name>a divalent metal cation</name>
        <dbReference type="ChEBI" id="CHEBI:60240"/>
        <label>6</label>
        <note>in cluster A</note>
    </ligand>
</feature>
<feature type="binding site" evidence="2">
    <location>
        <position position="40"/>
    </location>
    <ligand>
        <name>a divalent metal cation</name>
        <dbReference type="ChEBI" id="CHEBI:60240"/>
        <label>6</label>
        <note>in cluster A</note>
    </ligand>
</feature>
<feature type="binding site" evidence="2">
    <location>
        <position position="43"/>
    </location>
    <ligand>
        <name>a divalent metal cation</name>
        <dbReference type="ChEBI" id="CHEBI:60240"/>
        <label>4</label>
        <note>in cluster A</note>
    </ligand>
</feature>
<feature type="binding site" evidence="2">
    <location>
        <position position="43"/>
    </location>
    <ligand>
        <name>a divalent metal cation</name>
        <dbReference type="ChEBI" id="CHEBI:60240"/>
        <label>6</label>
        <note>in cluster A</note>
    </ligand>
</feature>
<feature type="binding site" evidence="2">
    <location>
        <position position="47"/>
    </location>
    <ligand>
        <name>a divalent metal cation</name>
        <dbReference type="ChEBI" id="CHEBI:60240"/>
        <label>4</label>
        <note>in cluster A</note>
    </ligand>
</feature>
<feature type="binding site" evidence="2">
    <location>
        <position position="49"/>
    </location>
    <ligand>
        <name>a divalent metal cation</name>
        <dbReference type="ChEBI" id="CHEBI:60240"/>
        <label>5</label>
        <note>in cluster A</note>
    </ligand>
</feature>
<feature type="binding site" evidence="2">
    <location>
        <position position="49"/>
    </location>
    <ligand>
        <name>a divalent metal cation</name>
        <dbReference type="ChEBI" id="CHEBI:60240"/>
        <label>7</label>
        <note>in cluster A</note>
    </ligand>
</feature>
<feature type="binding site" evidence="3">
    <location>
        <position position="54"/>
    </location>
    <ligand>
        <name>a divalent metal cation</name>
        <dbReference type="ChEBI" id="CHEBI:60240"/>
        <label>7</label>
        <note>in cluster A</note>
    </ligand>
</feature>
<feature type="binding site" evidence="2">
    <location>
        <position position="58"/>
    </location>
    <ligand>
        <name>a divalent metal cation</name>
        <dbReference type="ChEBI" id="CHEBI:60240"/>
        <label>7</label>
        <note>in cluster A</note>
    </ligand>
</feature>
<feature type="binding site" evidence="2">
    <location>
        <position position="59"/>
    </location>
    <ligand>
        <name>a divalent metal cation</name>
        <dbReference type="ChEBI" id="CHEBI:60240"/>
        <label>6</label>
        <note>in cluster A</note>
    </ligand>
</feature>
<feature type="binding site" evidence="2">
    <location>
        <position position="59"/>
    </location>
    <ligand>
        <name>a divalent metal cation</name>
        <dbReference type="ChEBI" id="CHEBI:60240"/>
        <label>7</label>
        <note>in cluster A</note>
    </ligand>
</feature>
<comment type="function">
    <text evidence="1">Metallothioneins have a high content of cysteine residues that bind various heavy metals.</text>
</comment>
<comment type="domain">
    <text>Class I metallothioneins contain 2 metal-binding domains: four divalent ions are chelated within cluster A of the alpha domain and are coordinated via cysteinyl thiolate bridges to 11 cysteine ligands. Cluster B, the corresponding region within the beta domain, can ligate three divalent ions to 9 cysteines.</text>
</comment>
<comment type="similarity">
    <text evidence="4">Belongs to the metallothionein superfamily. Type 1 family.</text>
</comment>
<keyword id="KW-0479">Metal-binding</keyword>
<keyword id="KW-0480">Metal-thiolate cluster</keyword>
<organism>
    <name type="scientific">Chaenocephalus aceratus</name>
    <name type="common">Blackfin icefish</name>
    <name type="synonym">Chaenichthys aceratus</name>
    <dbReference type="NCBI Taxonomy" id="36190"/>
    <lineage>
        <taxon>Eukaryota</taxon>
        <taxon>Metazoa</taxon>
        <taxon>Chordata</taxon>
        <taxon>Craniata</taxon>
        <taxon>Vertebrata</taxon>
        <taxon>Euteleostomi</taxon>
        <taxon>Actinopterygii</taxon>
        <taxon>Neopterygii</taxon>
        <taxon>Teleostei</taxon>
        <taxon>Neoteleostei</taxon>
        <taxon>Acanthomorphata</taxon>
        <taxon>Eupercaria</taxon>
        <taxon>Perciformes</taxon>
        <taxon>Notothenioidei</taxon>
        <taxon>Channichthyidae</taxon>
        <taxon>Chaenocephalus</taxon>
    </lineage>
</organism>
<accession>P52724</accession>
<reference key="1">
    <citation type="journal article" date="1997" name="Biochem. J.">
        <title>Difference in hepatic metallothionein content in Antarctic red-blooded and haemoglobinless fish: undetectable metallothionein levels in haemoglobinless fish is accompanied by accumulation of untranslated metallothionein mRNA.</title>
        <authorList>
            <person name="Scudiero R."/>
            <person name="Carginale V."/>
            <person name="Riggio M."/>
            <person name="Capasso C."/>
            <person name="Capasso A."/>
            <person name="Kille P."/>
            <person name="di Prisco G."/>
            <person name="Parisi E."/>
        </authorList>
    </citation>
    <scope>NUCLEOTIDE SEQUENCE [MRNA]</scope>
    <source>
        <tissue>Liver</tissue>
    </source>
</reference>